<dbReference type="EC" id="4.2.1.19" evidence="1"/>
<dbReference type="EMBL" id="CP000514">
    <property type="protein sequence ID" value="ABM20247.1"/>
    <property type="molecule type" value="Genomic_DNA"/>
</dbReference>
<dbReference type="RefSeq" id="WP_011786615.1">
    <property type="nucleotide sequence ID" value="NC_008740.1"/>
</dbReference>
<dbReference type="SMR" id="A1U5H8"/>
<dbReference type="STRING" id="351348.Maqu_3173"/>
<dbReference type="GeneID" id="31822482"/>
<dbReference type="KEGG" id="maq:Maqu_3173"/>
<dbReference type="eggNOG" id="COG0131">
    <property type="taxonomic scope" value="Bacteria"/>
</dbReference>
<dbReference type="HOGENOM" id="CLU_044308_3_0_6"/>
<dbReference type="OrthoDB" id="9790411at2"/>
<dbReference type="UniPathway" id="UPA00031">
    <property type="reaction ID" value="UER00011"/>
</dbReference>
<dbReference type="Proteomes" id="UP000000998">
    <property type="component" value="Chromosome"/>
</dbReference>
<dbReference type="GO" id="GO:0005737">
    <property type="term" value="C:cytoplasm"/>
    <property type="evidence" value="ECO:0007669"/>
    <property type="project" value="UniProtKB-SubCell"/>
</dbReference>
<dbReference type="GO" id="GO:0004424">
    <property type="term" value="F:imidazoleglycerol-phosphate dehydratase activity"/>
    <property type="evidence" value="ECO:0007669"/>
    <property type="project" value="UniProtKB-UniRule"/>
</dbReference>
<dbReference type="GO" id="GO:0000105">
    <property type="term" value="P:L-histidine biosynthetic process"/>
    <property type="evidence" value="ECO:0007669"/>
    <property type="project" value="UniProtKB-UniRule"/>
</dbReference>
<dbReference type="CDD" id="cd07914">
    <property type="entry name" value="IGPD"/>
    <property type="match status" value="1"/>
</dbReference>
<dbReference type="FunFam" id="3.30.230.40:FF:000002">
    <property type="entry name" value="Imidazoleglycerol-phosphate dehydratase"/>
    <property type="match status" value="1"/>
</dbReference>
<dbReference type="FunFam" id="3.30.230.40:FF:000003">
    <property type="entry name" value="Imidazoleglycerol-phosphate dehydratase HisB"/>
    <property type="match status" value="1"/>
</dbReference>
<dbReference type="Gene3D" id="3.30.230.40">
    <property type="entry name" value="Imidazole glycerol phosphate dehydratase, domain 1"/>
    <property type="match status" value="2"/>
</dbReference>
<dbReference type="HAMAP" id="MF_00076">
    <property type="entry name" value="HisB"/>
    <property type="match status" value="1"/>
</dbReference>
<dbReference type="InterPro" id="IPR038494">
    <property type="entry name" value="IGPD_sf"/>
</dbReference>
<dbReference type="InterPro" id="IPR000807">
    <property type="entry name" value="ImidazoleglycerolP_deHydtase"/>
</dbReference>
<dbReference type="InterPro" id="IPR020565">
    <property type="entry name" value="ImidazoleglycerP_deHydtase_CS"/>
</dbReference>
<dbReference type="InterPro" id="IPR020568">
    <property type="entry name" value="Ribosomal_Su5_D2-typ_SF"/>
</dbReference>
<dbReference type="NCBIfam" id="NF002106">
    <property type="entry name" value="PRK00951.1-1"/>
    <property type="match status" value="1"/>
</dbReference>
<dbReference type="NCBIfam" id="NF002109">
    <property type="entry name" value="PRK00951.1-5"/>
    <property type="match status" value="1"/>
</dbReference>
<dbReference type="NCBIfam" id="NF002111">
    <property type="entry name" value="PRK00951.2-1"/>
    <property type="match status" value="1"/>
</dbReference>
<dbReference type="NCBIfam" id="NF002114">
    <property type="entry name" value="PRK00951.2-4"/>
    <property type="match status" value="1"/>
</dbReference>
<dbReference type="PANTHER" id="PTHR23133:SF2">
    <property type="entry name" value="IMIDAZOLEGLYCEROL-PHOSPHATE DEHYDRATASE"/>
    <property type="match status" value="1"/>
</dbReference>
<dbReference type="PANTHER" id="PTHR23133">
    <property type="entry name" value="IMIDAZOLEGLYCEROL-PHOSPHATE DEHYDRATASE HIS7"/>
    <property type="match status" value="1"/>
</dbReference>
<dbReference type="Pfam" id="PF00475">
    <property type="entry name" value="IGPD"/>
    <property type="match status" value="1"/>
</dbReference>
<dbReference type="SUPFAM" id="SSF54211">
    <property type="entry name" value="Ribosomal protein S5 domain 2-like"/>
    <property type="match status" value="2"/>
</dbReference>
<dbReference type="PROSITE" id="PS00954">
    <property type="entry name" value="IGP_DEHYDRATASE_1"/>
    <property type="match status" value="1"/>
</dbReference>
<dbReference type="PROSITE" id="PS00955">
    <property type="entry name" value="IGP_DEHYDRATASE_2"/>
    <property type="match status" value="1"/>
</dbReference>
<proteinExistence type="inferred from homology"/>
<name>HIS7_MARN8</name>
<reference key="1">
    <citation type="journal article" date="2011" name="Appl. Environ. Microbiol.">
        <title>Genomic potential of Marinobacter aquaeolei, a biogeochemical 'opportunitroph'.</title>
        <authorList>
            <person name="Singer E."/>
            <person name="Webb E.A."/>
            <person name="Nelson W.C."/>
            <person name="Heidelberg J.F."/>
            <person name="Ivanova N."/>
            <person name="Pati A."/>
            <person name="Edwards K.J."/>
        </authorList>
    </citation>
    <scope>NUCLEOTIDE SEQUENCE [LARGE SCALE GENOMIC DNA]</scope>
    <source>
        <strain>ATCC 700491 / DSM 11845 / VT8</strain>
    </source>
</reference>
<protein>
    <recommendedName>
        <fullName evidence="1">Imidazoleglycerol-phosphate dehydratase</fullName>
        <shortName evidence="1">IGPD</shortName>
        <ecNumber evidence="1">4.2.1.19</ecNumber>
    </recommendedName>
</protein>
<feature type="chain" id="PRO_1000010291" description="Imidazoleglycerol-phosphate dehydratase">
    <location>
        <begin position="1"/>
        <end position="197"/>
    </location>
</feature>
<accession>A1U5H8</accession>
<gene>
    <name evidence="1" type="primary">hisB</name>
    <name type="ordered locus">Maqu_3173</name>
</gene>
<evidence type="ECO:0000255" key="1">
    <source>
        <dbReference type="HAMAP-Rule" id="MF_00076"/>
    </source>
</evidence>
<sequence length="197" mass="21858">MAERKARVERNTLETQITVEINLDGTGKANFDTGVPFLEHMMDQIARHGLVDLDITCKGDLHIDDHHTVEDIGITLGQAFKQAVGDKKGIRRYGHAYVPLDEALSRVVIDLSGRPGLLMDVPYTRASVGGFDVDLFAEFFQGFVNHSMVTLHIDNLKGKNTHHQIETVFKAFGRALRMAIEMDERMAGITPSTKGAL</sequence>
<organism>
    <name type="scientific">Marinobacter nauticus (strain ATCC 700491 / DSM 11845 / VT8)</name>
    <name type="common">Marinobacter aquaeolei</name>
    <dbReference type="NCBI Taxonomy" id="351348"/>
    <lineage>
        <taxon>Bacteria</taxon>
        <taxon>Pseudomonadati</taxon>
        <taxon>Pseudomonadota</taxon>
        <taxon>Gammaproteobacteria</taxon>
        <taxon>Pseudomonadales</taxon>
        <taxon>Marinobacteraceae</taxon>
        <taxon>Marinobacter</taxon>
    </lineage>
</organism>
<keyword id="KW-0028">Amino-acid biosynthesis</keyword>
<keyword id="KW-0963">Cytoplasm</keyword>
<keyword id="KW-0368">Histidine biosynthesis</keyword>
<keyword id="KW-0456">Lyase</keyword>
<comment type="catalytic activity">
    <reaction evidence="1">
        <text>D-erythro-1-(imidazol-4-yl)glycerol 3-phosphate = 3-(imidazol-4-yl)-2-oxopropyl phosphate + H2O</text>
        <dbReference type="Rhea" id="RHEA:11040"/>
        <dbReference type="ChEBI" id="CHEBI:15377"/>
        <dbReference type="ChEBI" id="CHEBI:57766"/>
        <dbReference type="ChEBI" id="CHEBI:58278"/>
        <dbReference type="EC" id="4.2.1.19"/>
    </reaction>
</comment>
<comment type="pathway">
    <text evidence="1">Amino-acid biosynthesis; L-histidine biosynthesis; L-histidine from 5-phospho-alpha-D-ribose 1-diphosphate: step 6/9.</text>
</comment>
<comment type="subcellular location">
    <subcellularLocation>
        <location evidence="1">Cytoplasm</location>
    </subcellularLocation>
</comment>
<comment type="similarity">
    <text evidence="1">Belongs to the imidazoleglycerol-phosphate dehydratase family.</text>
</comment>